<proteinExistence type="evidence at transcript level"/>
<feature type="chain" id="PRO_0000051299" description="EARP and GARP complex-interacting protein 1">
    <location>
        <begin position="1"/>
        <end position="387"/>
    </location>
</feature>
<feature type="repeat" description="WD 1">
    <location>
        <begin position="132"/>
        <end position="172"/>
    </location>
</feature>
<feature type="repeat" description="WD 2">
    <location>
        <begin position="180"/>
        <end position="222"/>
    </location>
</feature>
<feature type="repeat" description="WD 3">
    <location>
        <begin position="226"/>
        <end position="266"/>
    </location>
</feature>
<feature type="repeat" description="WD 4">
    <location>
        <begin position="270"/>
        <end position="310"/>
    </location>
</feature>
<feature type="repeat" description="WD 5">
    <location>
        <begin position="345"/>
        <end position="385"/>
    </location>
</feature>
<feature type="region of interest" description="Disordered" evidence="3">
    <location>
        <begin position="310"/>
        <end position="334"/>
    </location>
</feature>
<feature type="compositionally biased region" description="Basic and acidic residues" evidence="3">
    <location>
        <begin position="322"/>
        <end position="334"/>
    </location>
</feature>
<feature type="modified residue" description="N-acetylmethionine" evidence="1">
    <location>
        <position position="1"/>
    </location>
</feature>
<feature type="modified residue" description="Phosphoserine" evidence="1">
    <location>
        <position position="320"/>
    </location>
</feature>
<keyword id="KW-0007">Acetylation</keyword>
<keyword id="KW-0333">Golgi apparatus</keyword>
<keyword id="KW-0597">Phosphoprotein</keyword>
<keyword id="KW-1185">Reference proteome</keyword>
<keyword id="KW-0677">Repeat</keyword>
<keyword id="KW-0853">WD repeat</keyword>
<protein>
    <recommendedName>
        <fullName evidence="1">EARP and GARP complex-interacting protein 1</fullName>
    </recommendedName>
    <alternativeName>
        <fullName evidence="1">Endosome-associated recycling protein-interacting protein</fullName>
    </alternativeName>
    <alternativeName>
        <fullName evidence="1">Golgi-associated retrograde protein-interacting protein</fullName>
    </alternativeName>
    <alternativeName>
        <fullName>Tumor-suppressing STF cDNA 1 protein</fullName>
    </alternativeName>
    <alternativeName>
        <fullName evidence="1">Tumor-suppressing subchromosomal transferable fragment candidate gene 1 protein</fullName>
    </alternativeName>
</protein>
<sequence length="387" mass="43545">MEDDAPVIYGLEFQARALTPQTAETDAIRFLVGTQSLKYDNQIHIIDFDDENNIINKNVLLHQAGEIWHISASPADRGVLATCYNRTSDSKVLTCAAVWRMPKELESGSHESPDDSSSTAQTLELLCHLDNTAHSNMACVVWEPMGDGKKIISLADNHILLWDLQESSSQAVLASSASLGGKGQLKFTSGRWSPHHNCTQVATANDTTLRGWDTRTMSQIYCIENAHGQLVRDLDFNPNKQYYLASCGDDCKVKFWDTRNVTEPVKTLEEHSHWVWNVRYNHSHDQLVLTGSSDSRVILSNMVSISSEPFGHLVDDDDISDQEDHRSEEKSKEPLQDNVIATYEEHEDSVYAVDWSSADPWLFASLSYDGRLVINRVPRALKYHILL</sequence>
<name>EIPR1_MACFA</name>
<organism>
    <name type="scientific">Macaca fascicularis</name>
    <name type="common">Crab-eating macaque</name>
    <name type="synonym">Cynomolgus monkey</name>
    <dbReference type="NCBI Taxonomy" id="9541"/>
    <lineage>
        <taxon>Eukaryota</taxon>
        <taxon>Metazoa</taxon>
        <taxon>Chordata</taxon>
        <taxon>Craniata</taxon>
        <taxon>Vertebrata</taxon>
        <taxon>Euteleostomi</taxon>
        <taxon>Mammalia</taxon>
        <taxon>Eutheria</taxon>
        <taxon>Euarchontoglires</taxon>
        <taxon>Primates</taxon>
        <taxon>Haplorrhini</taxon>
        <taxon>Catarrhini</taxon>
        <taxon>Cercopithecidae</taxon>
        <taxon>Cercopithecinae</taxon>
        <taxon>Macaca</taxon>
    </lineage>
</organism>
<evidence type="ECO:0000250" key="1">
    <source>
        <dbReference type="UniProtKB" id="Q53HC9"/>
    </source>
</evidence>
<evidence type="ECO:0000250" key="2">
    <source>
        <dbReference type="UniProtKB" id="Q5PPK9"/>
    </source>
</evidence>
<evidence type="ECO:0000256" key="3">
    <source>
        <dbReference type="SAM" id="MobiDB-lite"/>
    </source>
</evidence>
<evidence type="ECO:0000305" key="4"/>
<comment type="function">
    <text evidence="1 2">Acts as a component of endosomal retrieval machinery that is involved in protein transport from early endosomes to either recycling endosomes or the trans-Golgi network (By similarity). Mediates the recruitment of Golgi-associated retrograde protein (GARP) complex to the trans-Golgi network and controls early endosome-to-Golgi transport of internalized protein (By similarity). Promotes the recycling of internalized transferrin receptor (TFRC) to the plasma membrane through interaction with endosome-associated recycling protein (EARP) complex (By similarity). Controls proper insulin distribution and secretion, and retention of cargo in mature dense core vesicles (By similarity). Required for the stability of the endosome-associated retrograde protein (EARP) complex subunits and for proper localization and association of EARP with membranes (By similarity).</text>
</comment>
<comment type="subunit">
    <text evidence="1">Interacts with two multisubunit tethering complexes: EARP composed of VPS50, VPS51, VPS52 and VPS53 subunits and GARP complex composed of VPS51, VPS52, VPS53 and VPS54 subunits. Interacts with SNAP29.</text>
</comment>
<comment type="subcellular location">
    <subcellularLocation>
        <location evidence="1">Golgi apparatus</location>
        <location evidence="1">trans-Golgi network</location>
    </subcellularLocation>
</comment>
<comment type="similarity">
    <text evidence="4">Belongs to the WD repeat EIPR1 family.</text>
</comment>
<accession>Q4R571</accession>
<reference key="1">
    <citation type="submission" date="2005-06" db="EMBL/GenBank/DDBJ databases">
        <title>DNA sequences of macaque genes expressed in brain or testis and its evolutionary implications.</title>
        <authorList>
            <consortium name="International consortium for macaque cDNA sequencing and analysis"/>
        </authorList>
    </citation>
    <scope>NUCLEOTIDE SEQUENCE [LARGE SCALE MRNA]</scope>
    <source>
        <tissue>Brain cortex</tissue>
    </source>
</reference>
<gene>
    <name evidence="1" type="primary">EIPR1</name>
    <name type="ORF">QccE-16240</name>
</gene>
<dbReference type="EMBL" id="AB169673">
    <property type="protein sequence ID" value="BAE01754.1"/>
    <property type="molecule type" value="mRNA"/>
</dbReference>
<dbReference type="SMR" id="Q4R571"/>
<dbReference type="STRING" id="9541.ENSMFAP00000027949"/>
<dbReference type="eggNOG" id="KOG1007">
    <property type="taxonomic scope" value="Eukaryota"/>
</dbReference>
<dbReference type="Proteomes" id="UP000233100">
    <property type="component" value="Unplaced"/>
</dbReference>
<dbReference type="GO" id="GO:0005802">
    <property type="term" value="C:trans-Golgi network"/>
    <property type="evidence" value="ECO:0000250"/>
    <property type="project" value="UniProtKB"/>
</dbReference>
<dbReference type="GO" id="GO:0032456">
    <property type="term" value="P:endocytic recycling"/>
    <property type="evidence" value="ECO:0000250"/>
    <property type="project" value="UniProtKB"/>
</dbReference>
<dbReference type="GO" id="GO:2001137">
    <property type="term" value="P:positive regulation of endocytic recycling"/>
    <property type="evidence" value="ECO:0000250"/>
    <property type="project" value="UniProtKB"/>
</dbReference>
<dbReference type="GO" id="GO:1905281">
    <property type="term" value="P:positive regulation of retrograde transport, endosome to Golgi"/>
    <property type="evidence" value="ECO:0000250"/>
    <property type="project" value="UniProtKB"/>
</dbReference>
<dbReference type="GO" id="GO:0016567">
    <property type="term" value="P:protein ubiquitination"/>
    <property type="evidence" value="ECO:0007669"/>
    <property type="project" value="TreeGrafter"/>
</dbReference>
<dbReference type="GO" id="GO:0050796">
    <property type="term" value="P:regulation of insulin secretion"/>
    <property type="evidence" value="ECO:0000250"/>
    <property type="project" value="UniProtKB"/>
</dbReference>
<dbReference type="FunFam" id="2.130.10.10:FF:000156">
    <property type="entry name" value="protein TSSC1 isoform X1"/>
    <property type="match status" value="1"/>
</dbReference>
<dbReference type="Gene3D" id="2.130.10.10">
    <property type="entry name" value="YVTN repeat-like/Quinoprotein amine dehydrogenase"/>
    <property type="match status" value="1"/>
</dbReference>
<dbReference type="InterPro" id="IPR040323">
    <property type="entry name" value="EIPR1"/>
</dbReference>
<dbReference type="InterPro" id="IPR015943">
    <property type="entry name" value="WD40/YVTN_repeat-like_dom_sf"/>
</dbReference>
<dbReference type="InterPro" id="IPR019775">
    <property type="entry name" value="WD40_repeat_CS"/>
</dbReference>
<dbReference type="InterPro" id="IPR001680">
    <property type="entry name" value="WD40_rpt"/>
</dbReference>
<dbReference type="PANTHER" id="PTHR14205:SF15">
    <property type="entry name" value="EARP AND GARP COMPLEX-INTERACTING PROTEIN 1"/>
    <property type="match status" value="1"/>
</dbReference>
<dbReference type="PANTHER" id="PTHR14205">
    <property type="entry name" value="WD-REPEAT PROTEIN"/>
    <property type="match status" value="1"/>
</dbReference>
<dbReference type="Pfam" id="PF23609">
    <property type="entry name" value="Beta-prop_EIPR1"/>
    <property type="match status" value="1"/>
</dbReference>
<dbReference type="Pfam" id="PF00400">
    <property type="entry name" value="WD40"/>
    <property type="match status" value="1"/>
</dbReference>
<dbReference type="SMART" id="SM00320">
    <property type="entry name" value="WD40"/>
    <property type="match status" value="5"/>
</dbReference>
<dbReference type="SUPFAM" id="SSF101908">
    <property type="entry name" value="Putative isomerase YbhE"/>
    <property type="match status" value="1"/>
</dbReference>
<dbReference type="PROSITE" id="PS00678">
    <property type="entry name" value="WD_REPEATS_1"/>
    <property type="match status" value="1"/>
</dbReference>
<dbReference type="PROSITE" id="PS50082">
    <property type="entry name" value="WD_REPEATS_2"/>
    <property type="match status" value="1"/>
</dbReference>
<dbReference type="PROSITE" id="PS50294">
    <property type="entry name" value="WD_REPEATS_REGION"/>
    <property type="match status" value="1"/>
</dbReference>